<accession>P38078</accession>
<organism>
    <name type="scientific">Candida tropicalis</name>
    <name type="common">Yeast</name>
    <dbReference type="NCBI Taxonomy" id="5482"/>
    <lineage>
        <taxon>Eukaryota</taxon>
        <taxon>Fungi</taxon>
        <taxon>Dikarya</taxon>
        <taxon>Ascomycota</taxon>
        <taxon>Saccharomycotina</taxon>
        <taxon>Pichiomycetes</taxon>
        <taxon>Debaryomycetaceae</taxon>
        <taxon>Candida/Lodderomyces clade</taxon>
        <taxon>Candida</taxon>
    </lineage>
</organism>
<comment type="function">
    <text evidence="1">Catalytic subunit of the V1 complex of vacuolar(H+)-ATPase (V-ATPase), a multisubunit enzyme composed of a peripheral complex (V1) that hydrolyzes ATP and a membrane integral complex (V0) that translocates protons (By similarity). V-ATPase is responsible for acidifying and maintaining the pH of intracellular compartments (By similarity).</text>
</comment>
<comment type="function">
    <text evidence="1">VDE is an endonuclease that can cleave at a site present in a VMA1 allele that lacks the derived endonuclease segment of the open reading frame; cleavage at this site only occurs during meiosis and initiates 'homing', a genetic event that converts a VMA1 allele lacking VDE into one that contains it.</text>
</comment>
<comment type="catalytic activity">
    <reaction evidence="1">
        <text>ATP + H2O + 4 H(+)(in) = ADP + phosphate + 5 H(+)(out)</text>
        <dbReference type="Rhea" id="RHEA:57720"/>
        <dbReference type="ChEBI" id="CHEBI:15377"/>
        <dbReference type="ChEBI" id="CHEBI:15378"/>
        <dbReference type="ChEBI" id="CHEBI:30616"/>
        <dbReference type="ChEBI" id="CHEBI:43474"/>
        <dbReference type="ChEBI" id="CHEBI:456216"/>
        <dbReference type="EC" id="7.1.2.2"/>
    </reaction>
</comment>
<comment type="subunit">
    <text evidence="1">V-ATPase is a heteromultimeric enzyme composed of a peripheral catalytic V1 complex (components A to H) attached to an integral membrane V0 proton pore complex (components: a, c, c', c'', d, e, f and VOA1).</text>
</comment>
<comment type="subcellular location">
    <subcellularLocation>
        <location evidence="1">Vacuole membrane</location>
        <topology evidence="1">Peripheral membrane protein</topology>
        <orientation evidence="1">Cytoplasmic side</orientation>
    </subcellularLocation>
</comment>
<comment type="PTM">
    <text>This protein undergoes a protein self splicing that involves a post-translational excision of the VDE intervening region (intein) followed by peptide ligation.</text>
</comment>
<comment type="similarity">
    <text evidence="5">Belongs to the ATPase alpha/beta chains family.</text>
</comment>
<sequence length="1088" mass="119154">MAGALENARKEIKRLSLDDTNESQYGQIYSVSGPVVIAENMIGCAMYELVKVGHDNLVGEVIRINGDKATIQVYEETAGVTVGDPVLRTGKPLSVELGPGLMETIYDGIQRPLKAIKDESQSIYIPRGIDVPALSRTVQYDFTPGQLKVGDHITGGDIFGSIYENSLLDDHKILLPPRARGTITSIAEAGSYNVEEPVLEVEFDGKKHKYSMMHTWPVRVPRPVAEKLTADHPLLTGQRVLDSLFPCVQGGTTCIPGAFGCGKTVISQSLSKFSNSDVIIYVGCFTKGTQVMMADGADKSIESIEVGDKVMGKDGMPREVVGLPRGYDDMYKVRQLSSTRRNAKSEGLMDFTVSADHKLILKTKQDVKIATRKIGGNTYTGVTFYVLEKTKTGIELVKAKTKVFGHHIHGQNGAEEKAATFAAGIDSKEYIDWIIEARDYVQVDEIVKTSTTQMINPVHFESGKLGNWLHEHKQNKSLAPQLGYLLGTWAGIGNVKSSAFTMNSKDDVKLATRIMNYSSKLGMTCSSTESGELNVAENEEEFFNNLGAEKDEAGDFTFDEFTDAMDELTINVHGAAASKKNNLLWNALKSLGFRAKSTDIVKSIPQHIAVDDIVVRESLIAGLVDAAGNVETKSNGSIEAVVRTSFRHVARGLVKIAHSLGIESSINIKDTHIDAAGVRQEFACIVNLTGAPLAGVLSKCALARNQTPVVKFTRDPVLFNFDLIKSAKENYYGITLAEETDHQFLLSNMALVHNCGERGNEMAEVLMEFPELFTEISGRKEPIMKRTTLVANTSNMPVAAREASIYTGITLAEYFRDQGKNVSMIADSSSRWAEALREISGRLGEMPADQGFPAYLGAKLASFYERAGKATALGSPDRVGSVSIVAAVSPAGGDFSDPVTTSTLGITQVFWGLDKKLAQRKHFPSINTSVSYSKYTNVLNKYYDSNYPEFPQLRDKIREILSNAEELEQVVQLVGKSALSDSDKITLDVATLIKEDFLQQNGYSSYDAFCPIWKTFDMMRAFISYYDEAQKAIANGAQWSKLAESTSDVKHAVSSAKFFEPSRGQKEGEKEFGDLLTTISERFAEASE</sequence>
<reference key="1">
    <citation type="journal article" date="1993" name="J. Biol. Chem.">
        <title>Peptide splicing in the vacuolar ATPase subunit A from Candida tropicalis.</title>
        <authorList>
            <person name="Gu H.H."/>
            <person name="Xu J."/>
            <person name="Gallagher M."/>
            <person name="Dean G.E."/>
        </authorList>
    </citation>
    <scope>NUCLEOTIDE SEQUENCE [GENOMIC DNA]</scope>
    <source>
        <strain>ATCC 750 / CBS 94 / DSM 11953 / JCM 1541 / NBRC 1400</strain>
    </source>
</reference>
<feature type="chain" id="PRO_0000002455" description="V-type proton ATPase catalytic subunit A, 1st part">
    <location>
        <begin position="1"/>
        <end position="283"/>
    </location>
</feature>
<feature type="chain" id="PRO_0000002456" description="Endonuclease PI-CtrI">
    <location>
        <begin position="284"/>
        <end position="754"/>
    </location>
</feature>
<feature type="chain" id="PRO_0000002457" description="V-type proton ATPase catalytic subunit A, 2nd part">
    <location>
        <begin position="755"/>
        <end position="1088"/>
    </location>
</feature>
<feature type="domain" description="DOD-type homing endonuclease" evidence="2">
    <location>
        <begin position="485"/>
        <end position="662"/>
    </location>
</feature>
<feature type="binding site" evidence="3">
    <location>
        <begin position="257"/>
        <end position="264"/>
    </location>
    <ligand>
        <name>ATP</name>
        <dbReference type="ChEBI" id="CHEBI:30616"/>
    </ligand>
</feature>
<name>VATA_CANTR</name>
<keyword id="KW-0067">ATP-binding</keyword>
<keyword id="KW-0068">Autocatalytic cleavage</keyword>
<keyword id="KW-0238">DNA-binding</keyword>
<keyword id="KW-0255">Endonuclease</keyword>
<keyword id="KW-0375">Hydrogen ion transport</keyword>
<keyword id="KW-0378">Hydrolase</keyword>
<keyword id="KW-0404">Intron homing</keyword>
<keyword id="KW-0406">Ion transport</keyword>
<keyword id="KW-0472">Membrane</keyword>
<keyword id="KW-0540">Nuclease</keyword>
<keyword id="KW-0547">Nucleotide-binding</keyword>
<keyword id="KW-0651">Protein splicing</keyword>
<keyword id="KW-1278">Translocase</keyword>
<keyword id="KW-0813">Transport</keyword>
<keyword id="KW-0926">Vacuole</keyword>
<dbReference type="EC" id="7.1.2.2" evidence="1"/>
<dbReference type="EC" id="3.1.-.-"/>
<dbReference type="EMBL" id="M64984">
    <property type="protein sequence ID" value="AAB03895.1"/>
    <property type="molecule type" value="Genomic_DNA"/>
</dbReference>
<dbReference type="PIR" id="A46080">
    <property type="entry name" value="A46080"/>
</dbReference>
<dbReference type="SMR" id="P38078"/>
<dbReference type="MEROPS" id="N09.001"/>
<dbReference type="VEuPathDB" id="FungiDB:CTMYA2_051490"/>
<dbReference type="VEuPathDB" id="FungiDB:CTRG_02148"/>
<dbReference type="GO" id="GO:0000329">
    <property type="term" value="C:fungal-type vacuole membrane"/>
    <property type="evidence" value="ECO:0007669"/>
    <property type="project" value="EnsemblFungi"/>
</dbReference>
<dbReference type="GO" id="GO:0000221">
    <property type="term" value="C:vacuolar proton-transporting V-type ATPase, V1 domain"/>
    <property type="evidence" value="ECO:0000250"/>
    <property type="project" value="UniProtKB"/>
</dbReference>
<dbReference type="GO" id="GO:0005524">
    <property type="term" value="F:ATP binding"/>
    <property type="evidence" value="ECO:0007669"/>
    <property type="project" value="UniProtKB-KW"/>
</dbReference>
<dbReference type="GO" id="GO:0003677">
    <property type="term" value="F:DNA binding"/>
    <property type="evidence" value="ECO:0007669"/>
    <property type="project" value="UniProtKB-KW"/>
</dbReference>
<dbReference type="GO" id="GO:0004519">
    <property type="term" value="F:endonuclease activity"/>
    <property type="evidence" value="ECO:0007669"/>
    <property type="project" value="UniProtKB-KW"/>
</dbReference>
<dbReference type="GO" id="GO:0046961">
    <property type="term" value="F:proton-transporting ATPase activity, rotational mechanism"/>
    <property type="evidence" value="ECO:0007669"/>
    <property type="project" value="EnsemblFungi"/>
</dbReference>
<dbReference type="GO" id="GO:0046034">
    <property type="term" value="P:ATP metabolic process"/>
    <property type="evidence" value="ECO:0007669"/>
    <property type="project" value="InterPro"/>
</dbReference>
<dbReference type="GO" id="GO:0016539">
    <property type="term" value="P:intein-mediated protein splicing"/>
    <property type="evidence" value="ECO:0007669"/>
    <property type="project" value="InterPro"/>
</dbReference>
<dbReference type="GO" id="GO:0006314">
    <property type="term" value="P:intron homing"/>
    <property type="evidence" value="ECO:0007669"/>
    <property type="project" value="UniProtKB-KW"/>
</dbReference>
<dbReference type="GO" id="GO:0007035">
    <property type="term" value="P:vacuolar acidification"/>
    <property type="evidence" value="ECO:0007669"/>
    <property type="project" value="EnsemblFungi"/>
</dbReference>
<dbReference type="CDD" id="cd18111">
    <property type="entry name" value="ATP-synt_V_A-type_alpha_C"/>
    <property type="match status" value="1"/>
</dbReference>
<dbReference type="CDD" id="cd18119">
    <property type="entry name" value="ATP-synt_V_A-type_alpha_N"/>
    <property type="match status" value="1"/>
</dbReference>
<dbReference type="CDD" id="cd00081">
    <property type="entry name" value="Hint"/>
    <property type="match status" value="1"/>
</dbReference>
<dbReference type="CDD" id="cd01134">
    <property type="entry name" value="V_A-ATPase_A"/>
    <property type="match status" value="1"/>
</dbReference>
<dbReference type="FunFam" id="2.40.30.20:FF:000002">
    <property type="entry name" value="V-type proton ATPase catalytic subunit A"/>
    <property type="match status" value="1"/>
</dbReference>
<dbReference type="FunFam" id="2.40.50.100:FF:000008">
    <property type="entry name" value="V-type proton ATPase catalytic subunit A"/>
    <property type="match status" value="1"/>
</dbReference>
<dbReference type="FunFam" id="1.10.1140.10:FF:000003">
    <property type="entry name" value="Vacuolar ATP synthase catalytic subunit A"/>
    <property type="match status" value="1"/>
</dbReference>
<dbReference type="FunFam" id="3.40.50.300:FF:001296">
    <property type="entry name" value="Vacuolar membrane ATPase subunit a"/>
    <property type="match status" value="1"/>
</dbReference>
<dbReference type="Gene3D" id="2.40.30.20">
    <property type="match status" value="1"/>
</dbReference>
<dbReference type="Gene3D" id="2.40.50.100">
    <property type="match status" value="1"/>
</dbReference>
<dbReference type="Gene3D" id="1.10.1140.10">
    <property type="entry name" value="Bovine Mitochondrial F1-atpase, Atp Synthase Beta Chain, Chain D, domain 3"/>
    <property type="match status" value="1"/>
</dbReference>
<dbReference type="Gene3D" id="3.10.28.10">
    <property type="entry name" value="Homing endonucleases"/>
    <property type="match status" value="1"/>
</dbReference>
<dbReference type="Gene3D" id="3.40.50.300">
    <property type="entry name" value="P-loop containing nucleotide triphosphate hydrolases"/>
    <property type="match status" value="2"/>
</dbReference>
<dbReference type="InterPro" id="IPR055190">
    <property type="entry name" value="ATP-synt_VA_C"/>
</dbReference>
<dbReference type="InterPro" id="IPR031686">
    <property type="entry name" value="ATP-synth_a_Xtn"/>
</dbReference>
<dbReference type="InterPro" id="IPR023366">
    <property type="entry name" value="ATP_synth_asu-like_sf"/>
</dbReference>
<dbReference type="InterPro" id="IPR020003">
    <property type="entry name" value="ATPase_a/bsu_AS"/>
</dbReference>
<dbReference type="InterPro" id="IPR004100">
    <property type="entry name" value="ATPase_F1/V1/A1_a/bsu_N"/>
</dbReference>
<dbReference type="InterPro" id="IPR036121">
    <property type="entry name" value="ATPase_F1/V1/A1_a/bsu_N_sf"/>
</dbReference>
<dbReference type="InterPro" id="IPR000194">
    <property type="entry name" value="ATPase_F1/V1/A1_a/bsu_nucl-bd"/>
</dbReference>
<dbReference type="InterPro" id="IPR024034">
    <property type="entry name" value="ATPase_F1/V1_b/a_C"/>
</dbReference>
<dbReference type="InterPro" id="IPR003587">
    <property type="entry name" value="Hint_dom_N"/>
</dbReference>
<dbReference type="InterPro" id="IPR036844">
    <property type="entry name" value="Hint_dom_sf"/>
</dbReference>
<dbReference type="InterPro" id="IPR007868">
    <property type="entry name" value="Hom_end_hint"/>
</dbReference>
<dbReference type="InterPro" id="IPR007869">
    <property type="entry name" value="Homing_endonuc_PI-Sce"/>
</dbReference>
<dbReference type="InterPro" id="IPR027434">
    <property type="entry name" value="Homing_endonucl"/>
</dbReference>
<dbReference type="InterPro" id="IPR004042">
    <property type="entry name" value="Intein_endonuc_central"/>
</dbReference>
<dbReference type="InterPro" id="IPR006141">
    <property type="entry name" value="Intein_N"/>
</dbReference>
<dbReference type="InterPro" id="IPR027417">
    <property type="entry name" value="P-loop_NTPase"/>
</dbReference>
<dbReference type="InterPro" id="IPR022878">
    <property type="entry name" value="V-ATPase_asu"/>
</dbReference>
<dbReference type="PANTHER" id="PTHR43607:SF1">
    <property type="entry name" value="H(+)-TRANSPORTING TWO-SECTOR ATPASE"/>
    <property type="match status" value="1"/>
</dbReference>
<dbReference type="PANTHER" id="PTHR43607">
    <property type="entry name" value="V-TYPE PROTON ATPASE CATALYTIC SUBUNIT A"/>
    <property type="match status" value="1"/>
</dbReference>
<dbReference type="Pfam" id="PF00006">
    <property type="entry name" value="ATP-synt_ab"/>
    <property type="match status" value="2"/>
</dbReference>
<dbReference type="Pfam" id="PF02874">
    <property type="entry name" value="ATP-synt_ab_N"/>
    <property type="match status" value="1"/>
</dbReference>
<dbReference type="Pfam" id="PF16886">
    <property type="entry name" value="ATP-synt_ab_Xtn"/>
    <property type="match status" value="1"/>
</dbReference>
<dbReference type="Pfam" id="PF22919">
    <property type="entry name" value="ATP-synt_VA_C"/>
    <property type="match status" value="1"/>
</dbReference>
<dbReference type="Pfam" id="PF05204">
    <property type="entry name" value="Hom_end"/>
    <property type="match status" value="1"/>
</dbReference>
<dbReference type="Pfam" id="PF05203">
    <property type="entry name" value="Hom_end_hint"/>
    <property type="match status" value="1"/>
</dbReference>
<dbReference type="SMART" id="SM00306">
    <property type="entry name" value="HintN"/>
    <property type="match status" value="1"/>
</dbReference>
<dbReference type="SUPFAM" id="SSF47917">
    <property type="entry name" value="C-terminal domain of alpha and beta subunits of F1 ATP synthase"/>
    <property type="match status" value="1"/>
</dbReference>
<dbReference type="SUPFAM" id="SSF51294">
    <property type="entry name" value="Hedgehog/intein (Hint) domain"/>
    <property type="match status" value="1"/>
</dbReference>
<dbReference type="SUPFAM" id="SSF55608">
    <property type="entry name" value="Homing endonucleases"/>
    <property type="match status" value="2"/>
</dbReference>
<dbReference type="SUPFAM" id="SSF50615">
    <property type="entry name" value="N-terminal domain of alpha and beta subunits of F1 ATP synthase"/>
    <property type="match status" value="1"/>
</dbReference>
<dbReference type="SUPFAM" id="SSF52540">
    <property type="entry name" value="P-loop containing nucleoside triphosphate hydrolases"/>
    <property type="match status" value="2"/>
</dbReference>
<dbReference type="PROSITE" id="PS00152">
    <property type="entry name" value="ATPASE_ALPHA_BETA"/>
    <property type="match status" value="1"/>
</dbReference>
<dbReference type="PROSITE" id="PS50819">
    <property type="entry name" value="INTEIN_ENDONUCLEASE"/>
    <property type="match status" value="1"/>
</dbReference>
<dbReference type="PROSITE" id="PS50817">
    <property type="entry name" value="INTEIN_N_TER"/>
    <property type="match status" value="1"/>
</dbReference>
<protein>
    <recommendedName>
        <fullName evidence="4">V-type proton ATPase catalytic subunit A</fullName>
        <shortName>V-ATPase subunit A</shortName>
        <ecNumber evidence="1">7.1.2.2</ecNumber>
    </recommendedName>
    <alternativeName>
        <fullName>Vacuolar proton pump subunit A</fullName>
    </alternativeName>
    <component>
        <recommendedName>
            <fullName>Endonuclease PI-CtrI</fullName>
            <ecNumber>3.1.-.-</ecNumber>
        </recommendedName>
        <alternativeName>
            <fullName>Ctr VMA intein</fullName>
        </alternativeName>
        <alternativeName>
            <fullName>VMA1-derived endonuclease</fullName>
            <shortName>VDE</shortName>
        </alternativeName>
    </component>
</protein>
<proteinExistence type="inferred from homology"/>
<gene>
    <name type="primary">VMA1</name>
</gene>
<evidence type="ECO:0000250" key="1">
    <source>
        <dbReference type="UniProtKB" id="P17255"/>
    </source>
</evidence>
<evidence type="ECO:0000255" key="2">
    <source>
        <dbReference type="PROSITE-ProRule" id="PRU00273"/>
    </source>
</evidence>
<evidence type="ECO:0000255" key="3">
    <source>
        <dbReference type="PROSITE-ProRule" id="PRU00499"/>
    </source>
</evidence>
<evidence type="ECO:0000303" key="4">
    <source>
    </source>
</evidence>
<evidence type="ECO:0000305" key="5"/>